<keyword id="KW-1185">Reference proteome</keyword>
<keyword id="KW-0687">Ribonucleoprotein</keyword>
<keyword id="KW-0689">Ribosomal protein</keyword>
<proteinExistence type="inferred from homology"/>
<accession>Q21K91</accession>
<dbReference type="EMBL" id="CP000282">
    <property type="protein sequence ID" value="ABD80888.1"/>
    <property type="molecule type" value="Genomic_DNA"/>
</dbReference>
<dbReference type="RefSeq" id="WP_011468108.1">
    <property type="nucleotide sequence ID" value="NC_007912.1"/>
</dbReference>
<dbReference type="SMR" id="Q21K91"/>
<dbReference type="STRING" id="203122.Sde_1626"/>
<dbReference type="GeneID" id="98613305"/>
<dbReference type="KEGG" id="sde:Sde_1626"/>
<dbReference type="eggNOG" id="COG0333">
    <property type="taxonomic scope" value="Bacteria"/>
</dbReference>
<dbReference type="HOGENOM" id="CLU_129084_2_1_6"/>
<dbReference type="OrthoDB" id="9801927at2"/>
<dbReference type="Proteomes" id="UP000001947">
    <property type="component" value="Chromosome"/>
</dbReference>
<dbReference type="GO" id="GO:0015934">
    <property type="term" value="C:large ribosomal subunit"/>
    <property type="evidence" value="ECO:0007669"/>
    <property type="project" value="InterPro"/>
</dbReference>
<dbReference type="GO" id="GO:0003735">
    <property type="term" value="F:structural constituent of ribosome"/>
    <property type="evidence" value="ECO:0007669"/>
    <property type="project" value="InterPro"/>
</dbReference>
<dbReference type="GO" id="GO:0006412">
    <property type="term" value="P:translation"/>
    <property type="evidence" value="ECO:0007669"/>
    <property type="project" value="UniProtKB-UniRule"/>
</dbReference>
<dbReference type="HAMAP" id="MF_00340">
    <property type="entry name" value="Ribosomal_bL32"/>
    <property type="match status" value="1"/>
</dbReference>
<dbReference type="InterPro" id="IPR002677">
    <property type="entry name" value="Ribosomal_bL32"/>
</dbReference>
<dbReference type="InterPro" id="IPR044957">
    <property type="entry name" value="Ribosomal_bL32_bact"/>
</dbReference>
<dbReference type="InterPro" id="IPR011332">
    <property type="entry name" value="Ribosomal_zn-bd"/>
</dbReference>
<dbReference type="NCBIfam" id="TIGR01031">
    <property type="entry name" value="rpmF_bact"/>
    <property type="match status" value="1"/>
</dbReference>
<dbReference type="PANTHER" id="PTHR35534">
    <property type="entry name" value="50S RIBOSOMAL PROTEIN L32"/>
    <property type="match status" value="1"/>
</dbReference>
<dbReference type="PANTHER" id="PTHR35534:SF1">
    <property type="entry name" value="LARGE RIBOSOMAL SUBUNIT PROTEIN BL32"/>
    <property type="match status" value="1"/>
</dbReference>
<dbReference type="Pfam" id="PF01783">
    <property type="entry name" value="Ribosomal_L32p"/>
    <property type="match status" value="1"/>
</dbReference>
<dbReference type="SUPFAM" id="SSF57829">
    <property type="entry name" value="Zn-binding ribosomal proteins"/>
    <property type="match status" value="1"/>
</dbReference>
<evidence type="ECO:0000255" key="1">
    <source>
        <dbReference type="HAMAP-Rule" id="MF_00340"/>
    </source>
</evidence>
<evidence type="ECO:0000256" key="2">
    <source>
        <dbReference type="SAM" id="MobiDB-lite"/>
    </source>
</evidence>
<evidence type="ECO:0000305" key="3"/>
<reference key="1">
    <citation type="journal article" date="2008" name="PLoS Genet.">
        <title>Complete genome sequence of the complex carbohydrate-degrading marine bacterium, Saccharophagus degradans strain 2-40 T.</title>
        <authorList>
            <person name="Weiner R.M."/>
            <person name="Taylor L.E. II"/>
            <person name="Henrissat B."/>
            <person name="Hauser L."/>
            <person name="Land M."/>
            <person name="Coutinho P.M."/>
            <person name="Rancurel C."/>
            <person name="Saunders E.H."/>
            <person name="Longmire A.G."/>
            <person name="Zhang H."/>
            <person name="Bayer E.A."/>
            <person name="Gilbert H.J."/>
            <person name="Larimer F."/>
            <person name="Zhulin I.B."/>
            <person name="Ekborg N.A."/>
            <person name="Lamed R."/>
            <person name="Richardson P.M."/>
            <person name="Borovok I."/>
            <person name="Hutcheson S."/>
        </authorList>
    </citation>
    <scope>NUCLEOTIDE SEQUENCE [LARGE SCALE GENOMIC DNA]</scope>
    <source>
        <strain>2-40 / ATCC 43961 / DSM 17024</strain>
    </source>
</reference>
<organism>
    <name type="scientific">Saccharophagus degradans (strain 2-40 / ATCC 43961 / DSM 17024)</name>
    <dbReference type="NCBI Taxonomy" id="203122"/>
    <lineage>
        <taxon>Bacteria</taxon>
        <taxon>Pseudomonadati</taxon>
        <taxon>Pseudomonadota</taxon>
        <taxon>Gammaproteobacteria</taxon>
        <taxon>Cellvibrionales</taxon>
        <taxon>Cellvibrionaceae</taxon>
        <taxon>Saccharophagus</taxon>
    </lineage>
</organism>
<protein>
    <recommendedName>
        <fullName evidence="1">Large ribosomal subunit protein bL32</fullName>
    </recommendedName>
    <alternativeName>
        <fullName evidence="3">50S ribosomal protein L32</fullName>
    </alternativeName>
</protein>
<comment type="similarity">
    <text evidence="1">Belongs to the bacterial ribosomal protein bL32 family.</text>
</comment>
<sequence length="60" mass="6834">MAVQQNRKTRSRRGMRRSHDALTGKTLSVDSTTGEKHLRHHVTPDGFYKGRKVVDVADDE</sequence>
<feature type="chain" id="PRO_0000296554" description="Large ribosomal subunit protein bL32">
    <location>
        <begin position="1"/>
        <end position="60"/>
    </location>
</feature>
<feature type="region of interest" description="Disordered" evidence="2">
    <location>
        <begin position="1"/>
        <end position="43"/>
    </location>
</feature>
<feature type="compositionally biased region" description="Basic residues" evidence="2">
    <location>
        <begin position="7"/>
        <end position="16"/>
    </location>
</feature>
<gene>
    <name evidence="1" type="primary">rpmF</name>
    <name type="ordered locus">Sde_1626</name>
</gene>
<name>RL32_SACD2</name>